<protein>
    <recommendedName>
        <fullName evidence="3">Outer capsid glycoprotein VP7</fullName>
    </recommendedName>
</protein>
<keyword id="KW-0024">Alternative initiation</keyword>
<keyword id="KW-0106">Calcium</keyword>
<keyword id="KW-0167">Capsid protein</keyword>
<keyword id="KW-1015">Disulfide bond</keyword>
<keyword id="KW-0325">Glycoprotein</keyword>
<keyword id="KW-1038">Host endoplasmic reticulum</keyword>
<keyword id="KW-0945">Host-virus interaction</keyword>
<keyword id="KW-0479">Metal-binding</keyword>
<keyword id="KW-1152">Outer capsid protein</keyword>
<keyword id="KW-0732">Signal</keyword>
<keyword id="KW-1146">T=13 icosahedral capsid protein</keyword>
<keyword id="KW-0946">Virion</keyword>
<evidence type="ECO:0000250" key="1">
    <source>
        <dbReference type="UniProtKB" id="P03533"/>
    </source>
</evidence>
<evidence type="ECO:0000255" key="2"/>
<evidence type="ECO:0000255" key="3">
    <source>
        <dbReference type="HAMAP-Rule" id="MF_04131"/>
    </source>
</evidence>
<evidence type="ECO:0000269" key="4">
    <source>
    </source>
</evidence>
<evidence type="ECO:0000269" key="5">
    <source>
    </source>
</evidence>
<evidence type="ECO:0000305" key="6"/>
<accession>Q86515</accession>
<name>VP7_ROTRF</name>
<organism>
    <name type="scientific">Rotavirus A (strain RVA/Cow/France/RF/1975/G6P6[1])</name>
    <name type="common">RV-A</name>
    <dbReference type="NCBI Taxonomy" id="10933"/>
    <lineage>
        <taxon>Viruses</taxon>
        <taxon>Riboviria</taxon>
        <taxon>Orthornavirae</taxon>
        <taxon>Duplornaviricota</taxon>
        <taxon>Resentoviricetes</taxon>
        <taxon>Reovirales</taxon>
        <taxon>Sedoreoviridae</taxon>
        <taxon>Rotavirus</taxon>
        <taxon>Rotavirus A</taxon>
    </lineage>
</organism>
<comment type="function">
    <text evidence="3">Calcium-binding protein that interacts with rotavirus cell receptors once the initial attachment by VP4 has been achieved. Rotavirus attachment and entry into the host cell probably involves multiple sequential contacts between the outer capsid proteins VP4 and VP7, and the cell receptors. Following entry into the host cell, low intracellular or intravesicular Ca(2+) concentration probably causes the calcium-stabilized VP7 trimers to dissociate from the virion. This step is probably necessary for the membrane-disrupting entry step and the release of VP4, which is locked onto the virion by VP7.</text>
</comment>
<comment type="subunit">
    <text evidence="3 4">Homotrimer; disulfide-linked. 2 Ca(2+) ions bound at each subunit interface in the trimer hold the trimer together (By similarity). Interacts with the intermediate capsid protein VP6 (PubMed:11285213). Interacts with the outer capsid protein VP5* (By similarity).</text>
</comment>
<comment type="subcellular location">
    <subcellularLocation>
        <location evidence="3 4">Virion</location>
    </subcellularLocation>
    <subcellularLocation>
        <location evidence="3">Host endoplasmic reticulum lumen</location>
    </subcellularLocation>
    <text evidence="3 4">The outer layer contains 780 copies of VP7, grouped as 260 trimers. Immature double-layered particles assembled in the cytoplasm bud across the membrane of the endoplasmic reticulum, acquiring during this process a transient lipid membrane that is modified with the ER resident viral glycoproteins NSP4 and VP7; these enveloped particles also contain VP4. As the particles move towards the interior of the ER cisternae, the transient lipid membrane and the non-structural protein NSP4 are lost, while the virus surface proteins VP4 and VP7 rearrange to form the outermost virus protein layer, yielding mature infectious triple-layered particles.</text>
</comment>
<comment type="alternative products">
    <event type="alternative initiation"/>
    <isoform>
        <id>Q86515-1</id>
        <name>1</name>
        <sequence type="displayed"/>
    </isoform>
    <isoform>
        <id>Q86515-2</id>
        <name>2</name>
        <sequence type="described" ref="VSP_038611"/>
    </isoform>
</comment>
<comment type="PTM">
    <text evidence="3">N-glycosylated.</text>
</comment>
<comment type="PTM">
    <text evidence="3">The N-terminus is blocked possibly by pyroglutamic acid.</text>
</comment>
<comment type="miscellaneous">
    <text evidence="3 5">Some rotavirus strains are neuraminidase-sensitive and require sialic acid to attach to the cell surface. Some rotavirus strains are integrin-dependent. Some rotavirus strains depend on ganglioside for their entry into the host cell. Hsp70 also seems to be involved in the entry of some strains.</text>
</comment>
<comment type="miscellaneous">
    <text evidence="3">In group A rotaviruses, VP7 defines the G serotype.</text>
</comment>
<comment type="miscellaneous">
    <molecule>Isoform 2</molecule>
    <text evidence="1">Produced by alternative initiation at Met-30 of isoform 1.</text>
</comment>
<comment type="similarity">
    <text evidence="3">Belongs to the rotavirus VP7 family.</text>
</comment>
<dbReference type="EMBL" id="X65940">
    <property type="protein sequence ID" value="CAA46743.1"/>
    <property type="molecule type" value="mRNA"/>
</dbReference>
<dbReference type="PIR" id="S25546">
    <property type="entry name" value="S25546"/>
</dbReference>
<dbReference type="SMR" id="Q86515"/>
<dbReference type="Proteomes" id="UP000007179">
    <property type="component" value="Genome"/>
</dbReference>
<dbReference type="GO" id="GO:0044166">
    <property type="term" value="C:host cell endoplasmic reticulum lumen"/>
    <property type="evidence" value="ECO:0007669"/>
    <property type="project" value="UniProtKB-SubCell"/>
</dbReference>
<dbReference type="GO" id="GO:0039621">
    <property type="term" value="C:T=13 icosahedral viral capsid"/>
    <property type="evidence" value="ECO:0007669"/>
    <property type="project" value="UniProtKB-UniRule"/>
</dbReference>
<dbReference type="GO" id="GO:0039624">
    <property type="term" value="C:viral outer capsid"/>
    <property type="evidence" value="ECO:0007669"/>
    <property type="project" value="UniProtKB-UniRule"/>
</dbReference>
<dbReference type="GO" id="GO:0046872">
    <property type="term" value="F:metal ion binding"/>
    <property type="evidence" value="ECO:0007669"/>
    <property type="project" value="UniProtKB-KW"/>
</dbReference>
<dbReference type="Gene3D" id="3.40.50.11130">
    <property type="entry name" value="Glycoprotein VP7, domain 1"/>
    <property type="match status" value="1"/>
</dbReference>
<dbReference type="Gene3D" id="2.60.120.800">
    <property type="entry name" value="Rotavirus outer-layer protein VP7, domain 2"/>
    <property type="match status" value="1"/>
</dbReference>
<dbReference type="HAMAP" id="MF_04130">
    <property type="entry name" value="Rota_VP7"/>
    <property type="match status" value="1"/>
</dbReference>
<dbReference type="HAMAP" id="MF_04131">
    <property type="entry name" value="Rota_VP7_A"/>
    <property type="match status" value="1"/>
</dbReference>
<dbReference type="InterPro" id="IPR001963">
    <property type="entry name" value="VP7"/>
</dbReference>
<dbReference type="InterPro" id="IPR042207">
    <property type="entry name" value="VP7_1"/>
</dbReference>
<dbReference type="InterPro" id="IPR042210">
    <property type="entry name" value="VP7_2"/>
</dbReference>
<dbReference type="Pfam" id="PF00434">
    <property type="entry name" value="VP7"/>
    <property type="match status" value="1"/>
</dbReference>
<reference key="1">
    <citation type="submission" date="1992-04" db="EMBL/GenBank/DDBJ databases">
        <title>Sequence of the gene encoding the outer glycoprotein of the bovine rotavirus (RF strain) and comparison with homologous genes from four bovine, simian and human rotaviruses.</title>
        <authorList>
            <person name="Cohen J."/>
        </authorList>
    </citation>
    <scope>NUCLEOTIDE SEQUENCE [MRNA]</scope>
</reference>
<reference key="2">
    <citation type="journal article" date="2001" name="EMBO J.">
        <title>Atomic structure of the major capsid protein of rotavirus: implications for the architecture of the virion.</title>
        <authorList>
            <person name="Mathieu M."/>
            <person name="Petitpas I."/>
            <person name="Navaza J."/>
            <person name="Lepault J."/>
            <person name="Kohli E."/>
            <person name="Pothier P."/>
            <person name="Prasad B.V.V."/>
            <person name="Cohen J."/>
            <person name="Rey F.A."/>
        </authorList>
    </citation>
    <scope>INTERACTION WITH THE INTERMEDIATE CAPSID PROTEIN VP6</scope>
    <scope>SUBCELLULAR LOCATION</scope>
</reference>
<reference key="3">
    <citation type="journal article" date="2004" name="Trends Microbiol.">
        <title>Multistep entry of rotavirus into cells: a Versaillesque dance.</title>
        <authorList>
            <person name="Lopez S."/>
            <person name="Arias C.F."/>
        </authorList>
    </citation>
    <scope>REVIEW</scope>
</reference>
<feature type="signal peptide" evidence="3">
    <location>
        <begin position="1"/>
        <end position="50"/>
    </location>
</feature>
<feature type="chain" id="PRO_0000369108" description="Outer capsid glycoprotein VP7" evidence="3">
    <location>
        <begin position="51"/>
        <end position="326"/>
    </location>
</feature>
<feature type="region of interest" description="CNP motif; interaction with ITGAV/ITGB3" evidence="3">
    <location>
        <begin position="165"/>
        <end position="167"/>
    </location>
</feature>
<feature type="region of interest" description="GPR motif; interaction with ITGAX/ITGB2" evidence="3">
    <location>
        <begin position="253"/>
        <end position="255"/>
    </location>
</feature>
<feature type="binding site" evidence="3">
    <location>
        <position position="95"/>
    </location>
    <ligand>
        <name>Ca(2+)</name>
        <dbReference type="ChEBI" id="CHEBI:29108"/>
        <label>1</label>
    </ligand>
</feature>
<feature type="binding site" evidence="3">
    <location>
        <position position="177"/>
    </location>
    <ligand>
        <name>Ca(2+)</name>
        <dbReference type="ChEBI" id="CHEBI:29108"/>
        <label>2</label>
    </ligand>
</feature>
<feature type="binding site" evidence="3">
    <location>
        <position position="206"/>
    </location>
    <ligand>
        <name>Ca(2+)</name>
        <dbReference type="ChEBI" id="CHEBI:29108"/>
        <label>1</label>
    </ligand>
</feature>
<feature type="binding site" evidence="3">
    <location>
        <position position="214"/>
    </location>
    <ligand>
        <name>Ca(2+)</name>
        <dbReference type="ChEBI" id="CHEBI:29108"/>
        <label>1</label>
    </ligand>
</feature>
<feature type="binding site" evidence="3">
    <location>
        <position position="216"/>
    </location>
    <ligand>
        <name>Ca(2+)</name>
        <dbReference type="ChEBI" id="CHEBI:29108"/>
        <label>1</label>
    </ligand>
</feature>
<feature type="binding site" evidence="3">
    <location>
        <position position="228"/>
    </location>
    <ligand>
        <name>Ca(2+)</name>
        <dbReference type="ChEBI" id="CHEBI:29108"/>
        <label>2</label>
    </ligand>
</feature>
<feature type="binding site" evidence="3">
    <location>
        <position position="229"/>
    </location>
    <ligand>
        <name>Ca(2+)</name>
        <dbReference type="ChEBI" id="CHEBI:29108"/>
        <label>2</label>
    </ligand>
</feature>
<feature type="binding site" evidence="3">
    <location>
        <position position="231"/>
    </location>
    <ligand>
        <name>Ca(2+)</name>
        <dbReference type="ChEBI" id="CHEBI:29108"/>
        <label>2</label>
    </ligand>
</feature>
<feature type="binding site" evidence="3">
    <location>
        <position position="301"/>
    </location>
    <ligand>
        <name>Ca(2+)</name>
        <dbReference type="ChEBI" id="CHEBI:29108"/>
        <label>2</label>
    </ligand>
</feature>
<feature type="glycosylation site" description="N-linked (GlcNAc...) asparagine; by host" evidence="2">
    <location>
        <position position="238"/>
    </location>
</feature>
<feature type="glycosylation site" description="N-linked (GlcNAc...) asparagine; by host" evidence="2">
    <location>
        <position position="318"/>
    </location>
</feature>
<feature type="disulfide bond" evidence="3">
    <location>
        <begin position="82"/>
        <end position="135"/>
    </location>
</feature>
<feature type="disulfide bond" evidence="3">
    <location>
        <begin position="165"/>
        <end position="249"/>
    </location>
</feature>
<feature type="disulfide bond" evidence="3">
    <location>
        <begin position="191"/>
        <end position="244"/>
    </location>
</feature>
<feature type="disulfide bond" evidence="3">
    <location>
        <begin position="196"/>
        <end position="207"/>
    </location>
</feature>
<feature type="splice variant" id="VSP_038611" description="In isoform 2." evidence="6">
    <location>
        <begin position="1"/>
        <end position="29"/>
    </location>
</feature>
<proteinExistence type="evidence at protein level"/>
<sequence>MYGIEYTTILIFLTSITLLNYMLKSITRIMDYIIYRFLLIVVILATIIKAQNYGVNLPITGSMDTAYADSTQSEPFLTSTLCLYYPVEASNEIADTEWKDTLSQLFLTKGWPTGSVYLKEYADIAAFSVEPQLYCDYNLVLMKYDSTQELDMSELADLILNEWLCNPMDITLYYYQQTDEANKWISTGSSCTVKVCPLNTQTLGIGCLITNPDTFETVATTEKLVITDVVDGVNHKLNVTTATCTIRNCKKLGPRENVAVIQVGGANILDITADPTTTPQTERMMRINWKKWWQVFYTVVDYVNQIIQTMSKRSRSLNSSAFYYRV</sequence>
<organismHost>
    <name type="scientific">Bos taurus</name>
    <name type="common">Bovine</name>
    <dbReference type="NCBI Taxonomy" id="9913"/>
</organismHost>